<dbReference type="EC" id="1.17.7.4" evidence="1"/>
<dbReference type="EMBL" id="CU928164">
    <property type="protein sequence ID" value="CAR16171.1"/>
    <property type="molecule type" value="Genomic_DNA"/>
</dbReference>
<dbReference type="RefSeq" id="WP_001166395.1">
    <property type="nucleotide sequence ID" value="NC_011750.1"/>
</dbReference>
<dbReference type="RefSeq" id="YP_002406078.1">
    <property type="nucleotide sequence ID" value="NC_011750.1"/>
</dbReference>
<dbReference type="SMR" id="B7NHD3"/>
<dbReference type="STRING" id="585057.ECIAI39_0030"/>
<dbReference type="GeneID" id="93777407"/>
<dbReference type="KEGG" id="ect:ECIAI39_0030"/>
<dbReference type="PATRIC" id="fig|585057.6.peg.31"/>
<dbReference type="HOGENOM" id="CLU_027486_1_0_6"/>
<dbReference type="UniPathway" id="UPA00056">
    <property type="reaction ID" value="UER00097"/>
</dbReference>
<dbReference type="UniPathway" id="UPA00059">
    <property type="reaction ID" value="UER00105"/>
</dbReference>
<dbReference type="Proteomes" id="UP000000749">
    <property type="component" value="Chromosome"/>
</dbReference>
<dbReference type="GO" id="GO:0051539">
    <property type="term" value="F:4 iron, 4 sulfur cluster binding"/>
    <property type="evidence" value="ECO:0007669"/>
    <property type="project" value="UniProtKB-UniRule"/>
</dbReference>
<dbReference type="GO" id="GO:0051745">
    <property type="term" value="F:4-hydroxy-3-methylbut-2-enyl diphosphate reductase activity"/>
    <property type="evidence" value="ECO:0007669"/>
    <property type="project" value="UniProtKB-UniRule"/>
</dbReference>
<dbReference type="GO" id="GO:0046872">
    <property type="term" value="F:metal ion binding"/>
    <property type="evidence" value="ECO:0007669"/>
    <property type="project" value="UniProtKB-KW"/>
</dbReference>
<dbReference type="GO" id="GO:0050992">
    <property type="term" value="P:dimethylallyl diphosphate biosynthetic process"/>
    <property type="evidence" value="ECO:0007669"/>
    <property type="project" value="UniProtKB-UniRule"/>
</dbReference>
<dbReference type="GO" id="GO:0019288">
    <property type="term" value="P:isopentenyl diphosphate biosynthetic process, methylerythritol 4-phosphate pathway"/>
    <property type="evidence" value="ECO:0007669"/>
    <property type="project" value="UniProtKB-UniRule"/>
</dbReference>
<dbReference type="GO" id="GO:0016114">
    <property type="term" value="P:terpenoid biosynthetic process"/>
    <property type="evidence" value="ECO:0007669"/>
    <property type="project" value="UniProtKB-UniRule"/>
</dbReference>
<dbReference type="CDD" id="cd13944">
    <property type="entry name" value="lytB_ispH"/>
    <property type="match status" value="1"/>
</dbReference>
<dbReference type="FunFam" id="3.40.1010.20:FF:000001">
    <property type="entry name" value="4-hydroxy-3-methylbut-2-enyl diphosphate reductase"/>
    <property type="match status" value="1"/>
</dbReference>
<dbReference type="FunFam" id="3.40.50.11270:FF:000001">
    <property type="entry name" value="4-hydroxy-3-methylbut-2-enyl diphosphate reductase"/>
    <property type="match status" value="1"/>
</dbReference>
<dbReference type="Gene3D" id="3.40.50.11270">
    <property type="match status" value="1"/>
</dbReference>
<dbReference type="Gene3D" id="3.40.1010.20">
    <property type="entry name" value="4-hydroxy-3-methylbut-2-enyl diphosphate reductase, catalytic domain"/>
    <property type="match status" value="2"/>
</dbReference>
<dbReference type="HAMAP" id="MF_00191">
    <property type="entry name" value="IspH"/>
    <property type="match status" value="1"/>
</dbReference>
<dbReference type="InterPro" id="IPR003451">
    <property type="entry name" value="LytB/IspH"/>
</dbReference>
<dbReference type="NCBIfam" id="TIGR00216">
    <property type="entry name" value="ispH_lytB"/>
    <property type="match status" value="1"/>
</dbReference>
<dbReference type="NCBIfam" id="NF002188">
    <property type="entry name" value="PRK01045.1-2"/>
    <property type="match status" value="1"/>
</dbReference>
<dbReference type="NCBIfam" id="NF002190">
    <property type="entry name" value="PRK01045.1-4"/>
    <property type="match status" value="1"/>
</dbReference>
<dbReference type="PANTHER" id="PTHR30426">
    <property type="entry name" value="4-HYDROXY-3-METHYLBUT-2-ENYL DIPHOSPHATE REDUCTASE"/>
    <property type="match status" value="1"/>
</dbReference>
<dbReference type="PANTHER" id="PTHR30426:SF0">
    <property type="entry name" value="4-HYDROXY-3-METHYLBUT-2-ENYL DIPHOSPHATE REDUCTASE"/>
    <property type="match status" value="1"/>
</dbReference>
<dbReference type="Pfam" id="PF02401">
    <property type="entry name" value="LYTB"/>
    <property type="match status" value="1"/>
</dbReference>
<gene>
    <name evidence="1" type="primary">ispH</name>
    <name type="ordered locus">ECIAI39_0030</name>
</gene>
<keyword id="KW-0004">4Fe-4S</keyword>
<keyword id="KW-0408">Iron</keyword>
<keyword id="KW-0411">Iron-sulfur</keyword>
<keyword id="KW-0414">Isoprene biosynthesis</keyword>
<keyword id="KW-0479">Metal-binding</keyword>
<keyword id="KW-0560">Oxidoreductase</keyword>
<name>ISPH_ECO7I</name>
<comment type="function">
    <text evidence="1">Catalyzes the conversion of 1-hydroxy-2-methyl-2-(E)-butenyl 4-diphosphate (HMBPP) into a mixture of isopentenyl diphosphate (IPP) and dimethylallyl diphosphate (DMAPP). Acts in the terminal step of the DOXP/MEP pathway for isoprenoid precursor biosynthesis.</text>
</comment>
<comment type="catalytic activity">
    <reaction evidence="1">
        <text>isopentenyl diphosphate + 2 oxidized [2Fe-2S]-[ferredoxin] + H2O = (2E)-4-hydroxy-3-methylbut-2-enyl diphosphate + 2 reduced [2Fe-2S]-[ferredoxin] + 2 H(+)</text>
        <dbReference type="Rhea" id="RHEA:24488"/>
        <dbReference type="Rhea" id="RHEA-COMP:10000"/>
        <dbReference type="Rhea" id="RHEA-COMP:10001"/>
        <dbReference type="ChEBI" id="CHEBI:15377"/>
        <dbReference type="ChEBI" id="CHEBI:15378"/>
        <dbReference type="ChEBI" id="CHEBI:33737"/>
        <dbReference type="ChEBI" id="CHEBI:33738"/>
        <dbReference type="ChEBI" id="CHEBI:128753"/>
        <dbReference type="ChEBI" id="CHEBI:128769"/>
        <dbReference type="EC" id="1.17.7.4"/>
    </reaction>
</comment>
<comment type="catalytic activity">
    <reaction evidence="1">
        <text>dimethylallyl diphosphate + 2 oxidized [2Fe-2S]-[ferredoxin] + H2O = (2E)-4-hydroxy-3-methylbut-2-enyl diphosphate + 2 reduced [2Fe-2S]-[ferredoxin] + 2 H(+)</text>
        <dbReference type="Rhea" id="RHEA:24825"/>
        <dbReference type="Rhea" id="RHEA-COMP:10000"/>
        <dbReference type="Rhea" id="RHEA-COMP:10001"/>
        <dbReference type="ChEBI" id="CHEBI:15377"/>
        <dbReference type="ChEBI" id="CHEBI:15378"/>
        <dbReference type="ChEBI" id="CHEBI:33737"/>
        <dbReference type="ChEBI" id="CHEBI:33738"/>
        <dbReference type="ChEBI" id="CHEBI:57623"/>
        <dbReference type="ChEBI" id="CHEBI:128753"/>
        <dbReference type="EC" id="1.17.7.4"/>
    </reaction>
</comment>
<comment type="cofactor">
    <cofactor evidence="1">
        <name>[4Fe-4S] cluster</name>
        <dbReference type="ChEBI" id="CHEBI:49883"/>
    </cofactor>
    <text evidence="1">Binds 1 [4Fe-4S] cluster per subunit.</text>
</comment>
<comment type="pathway">
    <text evidence="1">Isoprenoid biosynthesis; dimethylallyl diphosphate biosynthesis; dimethylallyl diphosphate from (2E)-4-hydroxy-3-methylbutenyl diphosphate: step 1/1.</text>
</comment>
<comment type="pathway">
    <text evidence="1">Isoprenoid biosynthesis; isopentenyl diphosphate biosynthesis via DXP pathway; isopentenyl diphosphate from 1-deoxy-D-xylulose 5-phosphate: step 6/6.</text>
</comment>
<comment type="subunit">
    <text evidence="1">Homodimer.</text>
</comment>
<comment type="similarity">
    <text evidence="1">Belongs to the IspH family.</text>
</comment>
<feature type="chain" id="PRO_1000118607" description="4-hydroxy-3-methylbut-2-enyl diphosphate reductase">
    <location>
        <begin position="1"/>
        <end position="316"/>
    </location>
</feature>
<feature type="active site" description="Proton donor" evidence="1">
    <location>
        <position position="126"/>
    </location>
</feature>
<feature type="binding site" evidence="1">
    <location>
        <position position="12"/>
    </location>
    <ligand>
        <name>[4Fe-4S] cluster</name>
        <dbReference type="ChEBI" id="CHEBI:49883"/>
    </ligand>
</feature>
<feature type="binding site" evidence="1">
    <location>
        <position position="41"/>
    </location>
    <ligand>
        <name>(2E)-4-hydroxy-3-methylbut-2-enyl diphosphate</name>
        <dbReference type="ChEBI" id="CHEBI:128753"/>
    </ligand>
</feature>
<feature type="binding site" evidence="1">
    <location>
        <position position="41"/>
    </location>
    <ligand>
        <name>dimethylallyl diphosphate</name>
        <dbReference type="ChEBI" id="CHEBI:57623"/>
    </ligand>
</feature>
<feature type="binding site" evidence="1">
    <location>
        <position position="41"/>
    </location>
    <ligand>
        <name>isopentenyl diphosphate</name>
        <dbReference type="ChEBI" id="CHEBI:128769"/>
    </ligand>
</feature>
<feature type="binding site" evidence="1">
    <location>
        <position position="74"/>
    </location>
    <ligand>
        <name>(2E)-4-hydroxy-3-methylbut-2-enyl diphosphate</name>
        <dbReference type="ChEBI" id="CHEBI:128753"/>
    </ligand>
</feature>
<feature type="binding site" evidence="1">
    <location>
        <position position="74"/>
    </location>
    <ligand>
        <name>dimethylallyl diphosphate</name>
        <dbReference type="ChEBI" id="CHEBI:57623"/>
    </ligand>
</feature>
<feature type="binding site" evidence="1">
    <location>
        <position position="74"/>
    </location>
    <ligand>
        <name>isopentenyl diphosphate</name>
        <dbReference type="ChEBI" id="CHEBI:128769"/>
    </ligand>
</feature>
<feature type="binding site" evidence="1">
    <location>
        <position position="96"/>
    </location>
    <ligand>
        <name>[4Fe-4S] cluster</name>
        <dbReference type="ChEBI" id="CHEBI:49883"/>
    </ligand>
</feature>
<feature type="binding site" evidence="1">
    <location>
        <position position="124"/>
    </location>
    <ligand>
        <name>(2E)-4-hydroxy-3-methylbut-2-enyl diphosphate</name>
        <dbReference type="ChEBI" id="CHEBI:128753"/>
    </ligand>
</feature>
<feature type="binding site" evidence="1">
    <location>
        <position position="124"/>
    </location>
    <ligand>
        <name>dimethylallyl diphosphate</name>
        <dbReference type="ChEBI" id="CHEBI:57623"/>
    </ligand>
</feature>
<feature type="binding site" evidence="1">
    <location>
        <position position="124"/>
    </location>
    <ligand>
        <name>isopentenyl diphosphate</name>
        <dbReference type="ChEBI" id="CHEBI:128769"/>
    </ligand>
</feature>
<feature type="binding site" evidence="1">
    <location>
        <position position="167"/>
    </location>
    <ligand>
        <name>(2E)-4-hydroxy-3-methylbut-2-enyl diphosphate</name>
        <dbReference type="ChEBI" id="CHEBI:128753"/>
    </ligand>
</feature>
<feature type="binding site" evidence="1">
    <location>
        <position position="197"/>
    </location>
    <ligand>
        <name>[4Fe-4S] cluster</name>
        <dbReference type="ChEBI" id="CHEBI:49883"/>
    </ligand>
</feature>
<feature type="binding site" evidence="1">
    <location>
        <position position="225"/>
    </location>
    <ligand>
        <name>(2E)-4-hydroxy-3-methylbut-2-enyl diphosphate</name>
        <dbReference type="ChEBI" id="CHEBI:128753"/>
    </ligand>
</feature>
<feature type="binding site" evidence="1">
    <location>
        <position position="225"/>
    </location>
    <ligand>
        <name>dimethylallyl diphosphate</name>
        <dbReference type="ChEBI" id="CHEBI:57623"/>
    </ligand>
</feature>
<feature type="binding site" evidence="1">
    <location>
        <position position="225"/>
    </location>
    <ligand>
        <name>isopentenyl diphosphate</name>
        <dbReference type="ChEBI" id="CHEBI:128769"/>
    </ligand>
</feature>
<feature type="binding site" evidence="1">
    <location>
        <position position="226"/>
    </location>
    <ligand>
        <name>(2E)-4-hydroxy-3-methylbut-2-enyl diphosphate</name>
        <dbReference type="ChEBI" id="CHEBI:128753"/>
    </ligand>
</feature>
<feature type="binding site" evidence="1">
    <location>
        <position position="226"/>
    </location>
    <ligand>
        <name>dimethylallyl diphosphate</name>
        <dbReference type="ChEBI" id="CHEBI:57623"/>
    </ligand>
</feature>
<feature type="binding site" evidence="1">
    <location>
        <position position="226"/>
    </location>
    <ligand>
        <name>isopentenyl diphosphate</name>
        <dbReference type="ChEBI" id="CHEBI:128769"/>
    </ligand>
</feature>
<feature type="binding site" evidence="1">
    <location>
        <position position="227"/>
    </location>
    <ligand>
        <name>(2E)-4-hydroxy-3-methylbut-2-enyl diphosphate</name>
        <dbReference type="ChEBI" id="CHEBI:128753"/>
    </ligand>
</feature>
<feature type="binding site" evidence="1">
    <location>
        <position position="227"/>
    </location>
    <ligand>
        <name>dimethylallyl diphosphate</name>
        <dbReference type="ChEBI" id="CHEBI:57623"/>
    </ligand>
</feature>
<feature type="binding site" evidence="1">
    <location>
        <position position="227"/>
    </location>
    <ligand>
        <name>isopentenyl diphosphate</name>
        <dbReference type="ChEBI" id="CHEBI:128769"/>
    </ligand>
</feature>
<feature type="binding site" evidence="1">
    <location>
        <position position="269"/>
    </location>
    <ligand>
        <name>(2E)-4-hydroxy-3-methylbut-2-enyl diphosphate</name>
        <dbReference type="ChEBI" id="CHEBI:128753"/>
    </ligand>
</feature>
<feature type="binding site" evidence="1">
    <location>
        <position position="269"/>
    </location>
    <ligand>
        <name>dimethylallyl diphosphate</name>
        <dbReference type="ChEBI" id="CHEBI:57623"/>
    </ligand>
</feature>
<feature type="binding site" evidence="1">
    <location>
        <position position="269"/>
    </location>
    <ligand>
        <name>isopentenyl diphosphate</name>
        <dbReference type="ChEBI" id="CHEBI:128769"/>
    </ligand>
</feature>
<protein>
    <recommendedName>
        <fullName evidence="1">4-hydroxy-3-methylbut-2-enyl diphosphate reductase</fullName>
        <shortName evidence="1">HMBPP reductase</shortName>
        <ecNumber evidence="1">1.17.7.4</ecNumber>
    </recommendedName>
</protein>
<accession>B7NHD3</accession>
<sequence length="316" mass="34775">MQILLANPRGFCAGVDRAISIVENALAIYGAPIYVRHEVVHNRYVVDSLRERGAIFIEQISEVPDGAILIFSAHGVSQAVRNEAKSRDLTVFDATCPLVTKVHMEVARASRRGEESILIGHAGHPEVEGTMGQYSNPEGGMYLVESPDDVWKLTVKNEEKLSFMTQTTLSVDDTSDVIDALRKRFPKIVGPRKDDICYATTNRQEAVRALAEQAEVVLVVGSKNSSNSNRLAELAQRMGKRAFLIDDAKDIQEEWVKEVKCVGVTAGASAPDILVQNVVARLQQLGGGEAIPLEGREENIVFEVPKELRVDIREVD</sequence>
<organism>
    <name type="scientific">Escherichia coli O7:K1 (strain IAI39 / ExPEC)</name>
    <dbReference type="NCBI Taxonomy" id="585057"/>
    <lineage>
        <taxon>Bacteria</taxon>
        <taxon>Pseudomonadati</taxon>
        <taxon>Pseudomonadota</taxon>
        <taxon>Gammaproteobacteria</taxon>
        <taxon>Enterobacterales</taxon>
        <taxon>Enterobacteriaceae</taxon>
        <taxon>Escherichia</taxon>
    </lineage>
</organism>
<proteinExistence type="inferred from homology"/>
<reference key="1">
    <citation type="journal article" date="2009" name="PLoS Genet.">
        <title>Organised genome dynamics in the Escherichia coli species results in highly diverse adaptive paths.</title>
        <authorList>
            <person name="Touchon M."/>
            <person name="Hoede C."/>
            <person name="Tenaillon O."/>
            <person name="Barbe V."/>
            <person name="Baeriswyl S."/>
            <person name="Bidet P."/>
            <person name="Bingen E."/>
            <person name="Bonacorsi S."/>
            <person name="Bouchier C."/>
            <person name="Bouvet O."/>
            <person name="Calteau A."/>
            <person name="Chiapello H."/>
            <person name="Clermont O."/>
            <person name="Cruveiller S."/>
            <person name="Danchin A."/>
            <person name="Diard M."/>
            <person name="Dossat C."/>
            <person name="Karoui M.E."/>
            <person name="Frapy E."/>
            <person name="Garry L."/>
            <person name="Ghigo J.M."/>
            <person name="Gilles A.M."/>
            <person name="Johnson J."/>
            <person name="Le Bouguenec C."/>
            <person name="Lescat M."/>
            <person name="Mangenot S."/>
            <person name="Martinez-Jehanne V."/>
            <person name="Matic I."/>
            <person name="Nassif X."/>
            <person name="Oztas S."/>
            <person name="Petit M.A."/>
            <person name="Pichon C."/>
            <person name="Rouy Z."/>
            <person name="Ruf C.S."/>
            <person name="Schneider D."/>
            <person name="Tourret J."/>
            <person name="Vacherie B."/>
            <person name="Vallenet D."/>
            <person name="Medigue C."/>
            <person name="Rocha E.P.C."/>
            <person name="Denamur E."/>
        </authorList>
    </citation>
    <scope>NUCLEOTIDE SEQUENCE [LARGE SCALE GENOMIC DNA]</scope>
    <source>
        <strain>IAI39 / ExPEC</strain>
    </source>
</reference>
<evidence type="ECO:0000255" key="1">
    <source>
        <dbReference type="HAMAP-Rule" id="MF_00191"/>
    </source>
</evidence>